<reference key="1">
    <citation type="journal article" date="2006" name="Science">
        <title>Phytophthora genome sequences uncover evolutionary origins and mechanisms of pathogenesis.</title>
        <authorList>
            <person name="Tyler B.M."/>
            <person name="Tripathy S."/>
            <person name="Zhang X."/>
            <person name="Dehal P."/>
            <person name="Jiang R.H.Y."/>
            <person name="Aerts A."/>
            <person name="Arredondo F.D."/>
            <person name="Baxter L."/>
            <person name="Bensasson D."/>
            <person name="Beynon J.L."/>
            <person name="Chapman J."/>
            <person name="Damasceno C.M.B."/>
            <person name="Dorrance A.E."/>
            <person name="Dou D."/>
            <person name="Dickerman A.W."/>
            <person name="Dubchak I.L."/>
            <person name="Garbelotto M."/>
            <person name="Gijzen M."/>
            <person name="Gordon S.G."/>
            <person name="Govers F."/>
            <person name="Grunwald N.J."/>
            <person name="Huang W."/>
            <person name="Ivors K.L."/>
            <person name="Jones R.W."/>
            <person name="Kamoun S."/>
            <person name="Krampis K."/>
            <person name="Lamour K.H."/>
            <person name="Lee M.-K."/>
            <person name="McDonald W.H."/>
            <person name="Medina M."/>
            <person name="Meijer H.J.G."/>
            <person name="Nordberg E.K."/>
            <person name="Maclean D.J."/>
            <person name="Ospina-Giraldo M.D."/>
            <person name="Morris P.F."/>
            <person name="Phuntumart V."/>
            <person name="Putnam N.H."/>
            <person name="Rash S."/>
            <person name="Rose J.K.C."/>
            <person name="Sakihama Y."/>
            <person name="Salamov A.A."/>
            <person name="Savidor A."/>
            <person name="Scheuring C.F."/>
            <person name="Smith B.M."/>
            <person name="Sobral B.W.S."/>
            <person name="Terry A."/>
            <person name="Torto-Alalibo T.A."/>
            <person name="Win J."/>
            <person name="Xu Z."/>
            <person name="Zhang H."/>
            <person name="Grigoriev I.V."/>
            <person name="Rokhsar D.S."/>
            <person name="Boore J.L."/>
        </authorList>
    </citation>
    <scope>NUCLEOTIDE SEQUENCE [LARGE SCALE GENOMIC DNA]</scope>
    <source>
        <strain>P6497</strain>
    </source>
</reference>
<reference key="2">
    <citation type="journal article" date="2011" name="Plant Cell">
        <title>Transcriptional programming and functional interactions within the Phytophthora sojae RXLR effector repertoire.</title>
        <authorList>
            <person name="Wang Q."/>
            <person name="Han C."/>
            <person name="Ferreira A.O."/>
            <person name="Yu X."/>
            <person name="Ye W."/>
            <person name="Tripathy S."/>
            <person name="Kale S.D."/>
            <person name="Gu B."/>
            <person name="Sheng Y."/>
            <person name="Sui Y."/>
            <person name="Wang X."/>
            <person name="Zhang Z."/>
            <person name="Cheng B."/>
            <person name="Dong S."/>
            <person name="Shan W."/>
            <person name="Zheng X."/>
            <person name="Dou D."/>
            <person name="Tyler B.M."/>
            <person name="Wang Y."/>
        </authorList>
    </citation>
    <scope>IDENTIFICATION</scope>
    <scope>DOMAIN</scope>
</reference>
<reference key="3">
    <citation type="journal article" date="2016" name="Nat. Commun.">
        <title>A Phytophthora sojae effector suppresses endoplasmic reticulum stress-mediated immunity by stabilizing plant Binding immunoglobulin Proteins.</title>
        <authorList>
            <person name="Jing M."/>
            <person name="Guo B."/>
            <person name="Li H."/>
            <person name="Yang B."/>
            <person name="Wang H."/>
            <person name="Kong G."/>
            <person name="Zhao Y."/>
            <person name="Xu H."/>
            <person name="Wang Y."/>
            <person name="Ye W."/>
            <person name="Dong S."/>
            <person name="Qiao Y."/>
            <person name="Tyler B.M."/>
            <person name="Ma W."/>
            <person name="Wang Y."/>
        </authorList>
    </citation>
    <scope>FUNCTION</scope>
    <scope>DISRUPTION PHENOTYPE</scope>
    <scope>DOMAIN</scope>
    <scope>MUTAGENESIS OF 60-LEU--THR-82</scope>
    <scope>INTERACTION WITH HOST BIP1; BIP2; BIP3 AND BIP4</scope>
    <scope>SUBCELLULAR LOCATION</scope>
</reference>
<evidence type="ECO:0000255" key="1"/>
<evidence type="ECO:0000256" key="2">
    <source>
        <dbReference type="SAM" id="MobiDB-lite"/>
    </source>
</evidence>
<evidence type="ECO:0000269" key="3">
    <source>
    </source>
</evidence>
<evidence type="ECO:0000269" key="4">
    <source>
    </source>
</evidence>
<evidence type="ECO:0000303" key="5">
    <source>
    </source>
</evidence>
<evidence type="ECO:0000305" key="6"/>
<evidence type="ECO:0000305" key="7">
    <source>
    </source>
</evidence>
<protein>
    <recommendedName>
        <fullName evidence="5">RxLR effector protein Avh262</fullName>
    </recommendedName>
    <alternativeName>
        <fullName evidence="5">Avirulence homolog protein 262</fullName>
    </alternativeName>
</protein>
<proteinExistence type="evidence at protein level"/>
<accession>G5A731</accession>
<dbReference type="EMBL" id="JH159160">
    <property type="protein sequence ID" value="EGZ09136.1"/>
    <property type="molecule type" value="Genomic_DNA"/>
</dbReference>
<dbReference type="RefSeq" id="XP_009535769.1">
    <property type="nucleotide sequence ID" value="XM_009537474.1"/>
</dbReference>
<dbReference type="SMR" id="G5A731"/>
<dbReference type="STRING" id="1094619.G5A731"/>
<dbReference type="EnsemblProtists" id="EGZ09136">
    <property type="protein sequence ID" value="EGZ09136"/>
    <property type="gene ID" value="PHYSODRAFT_288708"/>
</dbReference>
<dbReference type="GeneID" id="20640676"/>
<dbReference type="KEGG" id="psoj:PHYSODRAFT_288708"/>
<dbReference type="InParanoid" id="G5A731"/>
<dbReference type="Proteomes" id="UP000002640">
    <property type="component" value="Unassembled WGS sequence"/>
</dbReference>
<dbReference type="GO" id="GO:0005576">
    <property type="term" value="C:extracellular region"/>
    <property type="evidence" value="ECO:0007669"/>
    <property type="project" value="UniProtKB-SubCell"/>
</dbReference>
<dbReference type="GO" id="GO:0044165">
    <property type="term" value="C:host cell endoplasmic reticulum"/>
    <property type="evidence" value="ECO:0007669"/>
    <property type="project" value="UniProtKB-SubCell"/>
</dbReference>
<comment type="function">
    <text evidence="3 4">Effector that suppresses plant defense responses during the early stages of pathogen infection. Suppresses cell death induced by effectors and PAMPs in plant hosts (PubMed:21653195, PubMed:27256489). Avh262 stabilizes endoplasmic reticulum (ER)-luminal binding immunoglobulin proteins (BiPs), which act as negative regulators of plant resistance to Phytophthora. By stabilizing BiPs, Avh262 suppresses ER stress-triggered cell death and facilitates Phytophthora infection (PubMed:27256489).</text>
</comment>
<comment type="subunit">
    <text evidence="4">Interacts with host plant ER-luminal binding immunoglobulin proteins (BiPs) such as soybean BiP1, BiP2, BiP3 and BiP4.</text>
</comment>
<comment type="subcellular location">
    <subcellularLocation>
        <location evidence="4">Secreted</location>
    </subcellularLocation>
    <subcellularLocation>
        <location evidence="4">Host endoplasmic reticulum</location>
    </subcellularLocation>
</comment>
<comment type="domain">
    <text evidence="4">Residues 60 to 82 are required for the interaction with host plant binding immunoglobulin proteins (BiPs) and subsequent virulence.</text>
</comment>
<comment type="domain">
    <text evidence="7">The RxLR-dEER motif acts to carry the protein into the host cell cytoplasm through binding to cell surface phosphatidylinositol-3-phosphate.</text>
</comment>
<comment type="disruption phenotype">
    <text evidence="4">Leads to reduced virulence on etiolated soybean seedlings.</text>
</comment>
<comment type="similarity">
    <text evidence="6">Belongs to the RxLR effector family.</text>
</comment>
<feature type="signal peptide" evidence="1">
    <location>
        <begin position="1"/>
        <end position="18"/>
    </location>
</feature>
<feature type="chain" id="PRO_5003473018" description="RxLR effector protein Avh262">
    <location>
        <begin position="19"/>
        <end position="123"/>
    </location>
</feature>
<feature type="region of interest" description="Disordered" evidence="2">
    <location>
        <begin position="24"/>
        <end position="46"/>
    </location>
</feature>
<feature type="region of interest" description="BiP-binding" evidence="4">
    <location>
        <begin position="60"/>
        <end position="82"/>
    </location>
</feature>
<feature type="short sequence motif" description="RxLR-dEER" evidence="7">
    <location>
        <begin position="30"/>
        <end position="50"/>
    </location>
</feature>
<feature type="compositionally biased region" description="Basic and acidic residues" evidence="2">
    <location>
        <begin position="34"/>
        <end position="46"/>
    </location>
</feature>
<gene>
    <name evidence="5" type="primary">Avh262</name>
    <name type="ORF">PHYSODRAFT_288708</name>
</gene>
<organism>
    <name type="scientific">Phytophthora sojae (strain P6497)</name>
    <name type="common">Soybean stem and root rot agent</name>
    <name type="synonym">Phytophthora megasperma f. sp. glycines</name>
    <dbReference type="NCBI Taxonomy" id="1094619"/>
    <lineage>
        <taxon>Eukaryota</taxon>
        <taxon>Sar</taxon>
        <taxon>Stramenopiles</taxon>
        <taxon>Oomycota</taxon>
        <taxon>Peronosporales</taxon>
        <taxon>Peronosporaceae</taxon>
        <taxon>Phytophthora</taxon>
    </lineage>
</organism>
<keyword id="KW-1038">Host endoplasmic reticulum</keyword>
<keyword id="KW-1185">Reference proteome</keyword>
<keyword id="KW-0964">Secreted</keyword>
<keyword id="KW-0732">Signal</keyword>
<keyword id="KW-0843">Virulence</keyword>
<name>AV262_PHYSP</name>
<sequence length="123" mass="13259">MLPVAVVLVVFAVAVTSAESIHQVNPLPRRRRLKGTEEKGHHTNVNDEERVISLESASDLISKLKVKINAKLLAGDSAKPATLSKAQVASVAKEVVKEVKKTPKVWPPPMIKKGVRRGAGGVR</sequence>